<keyword id="KW-0251">Elongation factor</keyword>
<keyword id="KW-0648">Protein biosynthesis</keyword>
<keyword id="KW-1185">Reference proteome</keyword>
<proteinExistence type="evidence at transcript level"/>
<organism>
    <name type="scientific">Oryza sativa subsp. japonica</name>
    <name type="common">Rice</name>
    <dbReference type="NCBI Taxonomy" id="39947"/>
    <lineage>
        <taxon>Eukaryota</taxon>
        <taxon>Viridiplantae</taxon>
        <taxon>Streptophyta</taxon>
        <taxon>Embryophyta</taxon>
        <taxon>Tracheophyta</taxon>
        <taxon>Spermatophyta</taxon>
        <taxon>Magnoliopsida</taxon>
        <taxon>Liliopsida</taxon>
        <taxon>Poales</taxon>
        <taxon>Poaceae</taxon>
        <taxon>BOP clade</taxon>
        <taxon>Oryzoideae</taxon>
        <taxon>Oryzeae</taxon>
        <taxon>Oryzinae</taxon>
        <taxon>Oryza</taxon>
        <taxon>Oryza sativa</taxon>
    </lineage>
</organism>
<gene>
    <name type="ordered locus">Os03g0406200</name>
    <name type="ordered locus">LOC_Os03g29260</name>
    <name type="ORF">OSJNBa0002D18.20</name>
</gene>
<accession>Q40682</accession>
<accession>Q10JV7</accession>
<accession>Q9ZNV2</accession>
<name>EF1D2_ORYSJ</name>
<comment type="function">
    <text>EF-1-beta and EF-1-beta' stimulate the exchange of GDP bound to EF-1-alpha to GTP.</text>
</comment>
<comment type="subunit">
    <text evidence="1">EF-1 is composed of 4 subunits: alpha, beta (1B-alpha=beta'), delta (1B-beta), and gamma (1B-gamma).</text>
</comment>
<comment type="similarity">
    <text evidence="3">Belongs to the EF-1-beta/EF-1-delta family.</text>
</comment>
<comment type="sequence caution" evidence="3">
    <conflict type="erroneous initiation">
        <sequence resource="EMBL-CDS" id="AAA33904"/>
    </conflict>
</comment>
<sequence>MAITLSNVNSEAGLQKLDEYLLTRSYISGYQASKDDMTVFTSLPSAPAASYVNVTRWYDHISALLRSSGVTAEGEGVKVESTACSVSPTADQKAPAADEEDDDDVDLFGEETEEEKKAAEERAAAVKASGKKKESGKSSVLLDVKPWDDETDMAKLEEAVRNVKMEGLLWGASKLVPVGYGIKKLQIMMTIVDDLVSVDSLIEDYFYTEPANEFIQSCDIVAFNKI</sequence>
<evidence type="ECO:0000250" key="1"/>
<evidence type="ECO:0000256" key="2">
    <source>
        <dbReference type="SAM" id="MobiDB-lite"/>
    </source>
</evidence>
<evidence type="ECO:0000305" key="3"/>
<dbReference type="EMBL" id="D83726">
    <property type="protein sequence ID" value="BAA34598.1"/>
    <property type="molecule type" value="Genomic_DNA"/>
</dbReference>
<dbReference type="EMBL" id="D83727">
    <property type="protein sequence ID" value="BAA34599.1"/>
    <property type="molecule type" value="mRNA"/>
</dbReference>
<dbReference type="EMBL" id="AC134886">
    <property type="protein sequence ID" value="AAU89237.1"/>
    <property type="molecule type" value="Genomic_DNA"/>
</dbReference>
<dbReference type="EMBL" id="DP000009">
    <property type="protein sequence ID" value="ABF96519.1"/>
    <property type="molecule type" value="Genomic_DNA"/>
</dbReference>
<dbReference type="EMBL" id="AP008209">
    <property type="protein sequence ID" value="BAF12247.1"/>
    <property type="molecule type" value="Genomic_DNA"/>
</dbReference>
<dbReference type="EMBL" id="AP014959">
    <property type="protein sequence ID" value="BAS84634.1"/>
    <property type="molecule type" value="Genomic_DNA"/>
</dbReference>
<dbReference type="EMBL" id="AK059914">
    <property type="protein sequence ID" value="BAG87209.1"/>
    <property type="molecule type" value="mRNA"/>
</dbReference>
<dbReference type="EMBL" id="AK073405">
    <property type="protein sequence ID" value="BAG93440.1"/>
    <property type="molecule type" value="mRNA"/>
</dbReference>
<dbReference type="EMBL" id="L36094">
    <property type="protein sequence ID" value="AAA33904.1"/>
    <property type="status" value="ALT_INIT"/>
    <property type="molecule type" value="mRNA"/>
</dbReference>
<dbReference type="PIR" id="JC4144">
    <property type="entry name" value="JC4144"/>
</dbReference>
<dbReference type="RefSeq" id="XP_015627792.1">
    <property type="nucleotide sequence ID" value="XM_015772306.1"/>
</dbReference>
<dbReference type="SMR" id="Q40682"/>
<dbReference type="FunCoup" id="Q40682">
    <property type="interactions" value="3012"/>
</dbReference>
<dbReference type="IntAct" id="Q40682">
    <property type="interactions" value="4"/>
</dbReference>
<dbReference type="STRING" id="39947.Q40682"/>
<dbReference type="PaxDb" id="39947-Q40682"/>
<dbReference type="EnsemblPlants" id="Os03t0406200-01">
    <property type="protein sequence ID" value="Os03t0406200-01"/>
    <property type="gene ID" value="Os03g0406200"/>
</dbReference>
<dbReference type="EnsemblPlants" id="Os03t0406200-02">
    <property type="protein sequence ID" value="Os03t0406200-02"/>
    <property type="gene ID" value="Os03g0406200"/>
</dbReference>
<dbReference type="Gramene" id="Os03t0406200-01">
    <property type="protein sequence ID" value="Os03t0406200-01"/>
    <property type="gene ID" value="Os03g0406200"/>
</dbReference>
<dbReference type="Gramene" id="Os03t0406200-02">
    <property type="protein sequence ID" value="Os03t0406200-02"/>
    <property type="gene ID" value="Os03g0406200"/>
</dbReference>
<dbReference type="KEGG" id="dosa:Os03g0406200"/>
<dbReference type="eggNOG" id="KOG1668">
    <property type="taxonomic scope" value="Eukaryota"/>
</dbReference>
<dbReference type="HOGENOM" id="CLU_050172_3_0_1"/>
<dbReference type="InParanoid" id="Q40682"/>
<dbReference type="OMA" id="CKFPGKF"/>
<dbReference type="OrthoDB" id="331763at2759"/>
<dbReference type="Proteomes" id="UP000000763">
    <property type="component" value="Chromosome 3"/>
</dbReference>
<dbReference type="Proteomes" id="UP000059680">
    <property type="component" value="Chromosome 3"/>
</dbReference>
<dbReference type="GO" id="GO:0005829">
    <property type="term" value="C:cytosol"/>
    <property type="evidence" value="ECO:0000318"/>
    <property type="project" value="GO_Central"/>
</dbReference>
<dbReference type="GO" id="GO:0005853">
    <property type="term" value="C:eukaryotic translation elongation factor 1 complex"/>
    <property type="evidence" value="ECO:0007669"/>
    <property type="project" value="InterPro"/>
</dbReference>
<dbReference type="GO" id="GO:0005085">
    <property type="term" value="F:guanyl-nucleotide exchange factor activity"/>
    <property type="evidence" value="ECO:0000318"/>
    <property type="project" value="GO_Central"/>
</dbReference>
<dbReference type="GO" id="GO:0003746">
    <property type="term" value="F:translation elongation factor activity"/>
    <property type="evidence" value="ECO:0007669"/>
    <property type="project" value="UniProtKB-KW"/>
</dbReference>
<dbReference type="GO" id="GO:0006414">
    <property type="term" value="P:translational elongation"/>
    <property type="evidence" value="ECO:0000318"/>
    <property type="project" value="GO_Central"/>
</dbReference>
<dbReference type="CDD" id="cd00292">
    <property type="entry name" value="EF1B"/>
    <property type="match status" value="1"/>
</dbReference>
<dbReference type="FunFam" id="3.30.70.60:FF:000001">
    <property type="entry name" value="Elongation factor 1-beta 1 like"/>
    <property type="match status" value="1"/>
</dbReference>
<dbReference type="FunFam" id="1.20.1050.130:FF:000006">
    <property type="entry name" value="Elongation factor 1-delta 1"/>
    <property type="match status" value="1"/>
</dbReference>
<dbReference type="Gene3D" id="1.20.1050.130">
    <property type="match status" value="1"/>
</dbReference>
<dbReference type="Gene3D" id="3.30.70.60">
    <property type="match status" value="1"/>
</dbReference>
<dbReference type="InterPro" id="IPR036219">
    <property type="entry name" value="eEF-1beta-like_sf"/>
</dbReference>
<dbReference type="InterPro" id="IPR049720">
    <property type="entry name" value="EF1B_bsu/dsu"/>
</dbReference>
<dbReference type="InterPro" id="IPR014038">
    <property type="entry name" value="EF1B_bsu/dsu_GNE"/>
</dbReference>
<dbReference type="InterPro" id="IPR036282">
    <property type="entry name" value="Glutathione-S-Trfase_C_sf"/>
</dbReference>
<dbReference type="InterPro" id="IPR014717">
    <property type="entry name" value="Transl_elong_EF1B/ribsomal_bS6"/>
</dbReference>
<dbReference type="InterPro" id="IPR001326">
    <property type="entry name" value="Transl_elong_EF1B_B/D_CS"/>
</dbReference>
<dbReference type="PANTHER" id="PTHR11595">
    <property type="entry name" value="EF-HAND AND COILED-COIL DOMAIN-CONTAINING FAMILY MEMBER"/>
    <property type="match status" value="1"/>
</dbReference>
<dbReference type="PANTHER" id="PTHR11595:SF83">
    <property type="entry name" value="ELONGATION FACTOR 1-DELTA 2"/>
    <property type="match status" value="1"/>
</dbReference>
<dbReference type="Pfam" id="PF00736">
    <property type="entry name" value="EF1_GNE"/>
    <property type="match status" value="1"/>
</dbReference>
<dbReference type="SMART" id="SM00888">
    <property type="entry name" value="EF1_GNE"/>
    <property type="match status" value="1"/>
</dbReference>
<dbReference type="SUPFAM" id="SSF54984">
    <property type="entry name" value="eEF-1beta-like"/>
    <property type="match status" value="1"/>
</dbReference>
<dbReference type="SUPFAM" id="SSF47616">
    <property type="entry name" value="GST C-terminal domain-like"/>
    <property type="match status" value="1"/>
</dbReference>
<dbReference type="PROSITE" id="PS00824">
    <property type="entry name" value="EF1BD_1"/>
    <property type="match status" value="1"/>
</dbReference>
<dbReference type="PROSITE" id="PS00825">
    <property type="entry name" value="EF1BD_2"/>
    <property type="match status" value="1"/>
</dbReference>
<protein>
    <recommendedName>
        <fullName>Elongation factor 1-delta 2</fullName>
        <shortName>EF-1-delta 2</shortName>
    </recommendedName>
    <alternativeName>
        <fullName>Elongation factor 1B-beta 2</fullName>
    </alternativeName>
    <alternativeName>
        <fullName>eEF-1B beta 2</fullName>
    </alternativeName>
</protein>
<feature type="initiator methionine" description="Removed" evidence="1">
    <location>
        <position position="1"/>
    </location>
</feature>
<feature type="chain" id="PRO_0000228122" description="Elongation factor 1-delta 2">
    <location>
        <begin position="2"/>
        <end position="226"/>
    </location>
</feature>
<feature type="region of interest" description="Disordered" evidence="2">
    <location>
        <begin position="82"/>
        <end position="131"/>
    </location>
</feature>
<feature type="compositionally biased region" description="Acidic residues" evidence="2">
    <location>
        <begin position="97"/>
        <end position="113"/>
    </location>
</feature>
<feature type="compositionally biased region" description="Basic and acidic residues" evidence="2">
    <location>
        <begin position="114"/>
        <end position="124"/>
    </location>
</feature>
<feature type="sequence conflict" description="In Ref. 7; AAA33904." evidence="3" ref="7">
    <original>P</original>
    <variation>A</variation>
    <location>
        <position position="146"/>
    </location>
</feature>
<feature type="sequence conflict" description="In Ref. 7." evidence="3" ref="7">
    <original>ETDMAKLEEAVRNVKMEGLLWGASKLVPVGYG</original>
    <variation>GNRHGKAWRKLLRNFEDGGPALGWIQTLYQLGYC</variation>
    <location>
        <begin position="150"/>
        <end position="181"/>
    </location>
</feature>
<feature type="sequence conflict" description="In Ref. 7; AAA33904." evidence="3" ref="7">
    <original>L</original>
    <variation>F</variation>
    <location>
        <position position="185"/>
    </location>
</feature>
<feature type="sequence conflict" description="In Ref. 7; AAA33904." evidence="3" ref="7">
    <original>F</original>
    <variation>V</variation>
    <location>
        <position position="223"/>
    </location>
</feature>
<reference key="1">
    <citation type="journal article" date="1998" name="Biochim. Biophys. Acta">
        <title>A novel variant of translation elongation factor-1beta: isolation and characterization of the rice gene encoding EF-1beta2.</title>
        <authorList>
            <person name="Terui Y."/>
            <person name="Tsutsumi K."/>
            <person name="Kidou S."/>
            <person name="Sawazaki T."/>
            <person name="Kuroiwa Y."/>
            <person name="Yamaki M."/>
            <person name="Ejiri S."/>
        </authorList>
    </citation>
    <scope>NUCLEOTIDE SEQUENCE [GENOMIC DNA / MRNA]</scope>
    <source>
        <strain>cv. Nipponbare</strain>
    </source>
</reference>
<reference key="2">
    <citation type="journal article" date="2005" name="Genome Res.">
        <title>Sequence, annotation, and analysis of synteny between rice chromosome 3 and diverged grass species.</title>
        <authorList>
            <consortium name="The rice chromosome 3 sequencing consortium"/>
            <person name="Buell C.R."/>
            <person name="Yuan Q."/>
            <person name="Ouyang S."/>
            <person name="Liu J."/>
            <person name="Zhu W."/>
            <person name="Wang A."/>
            <person name="Maiti R."/>
            <person name="Haas B."/>
            <person name="Wortman J."/>
            <person name="Pertea M."/>
            <person name="Jones K.M."/>
            <person name="Kim M."/>
            <person name="Overton L."/>
            <person name="Tsitrin T."/>
            <person name="Fadrosh D."/>
            <person name="Bera J."/>
            <person name="Weaver B."/>
            <person name="Jin S."/>
            <person name="Johri S."/>
            <person name="Reardon M."/>
            <person name="Webb K."/>
            <person name="Hill J."/>
            <person name="Moffat K."/>
            <person name="Tallon L."/>
            <person name="Van Aken S."/>
            <person name="Lewis M."/>
            <person name="Utterback T."/>
            <person name="Feldblyum T."/>
            <person name="Zismann V."/>
            <person name="Iobst S."/>
            <person name="Hsiao J."/>
            <person name="de Vazeille A.R."/>
            <person name="Salzberg S.L."/>
            <person name="White O."/>
            <person name="Fraser C.M."/>
            <person name="Yu Y."/>
            <person name="Kim H."/>
            <person name="Rambo T."/>
            <person name="Currie J."/>
            <person name="Collura K."/>
            <person name="Kernodle-Thompson S."/>
            <person name="Wei F."/>
            <person name="Kudrna K."/>
            <person name="Ammiraju J.S.S."/>
            <person name="Luo M."/>
            <person name="Goicoechea J.L."/>
            <person name="Wing R.A."/>
            <person name="Henry D."/>
            <person name="Oates R."/>
            <person name="Palmer M."/>
            <person name="Pries G."/>
            <person name="Saski C."/>
            <person name="Simmons J."/>
            <person name="Soderlund C."/>
            <person name="Nelson W."/>
            <person name="de la Bastide M."/>
            <person name="Spiegel L."/>
            <person name="Nascimento L."/>
            <person name="Huang E."/>
            <person name="Preston R."/>
            <person name="Zutavern T."/>
            <person name="Palmer L."/>
            <person name="O'Shaughnessy A."/>
            <person name="Dike S."/>
            <person name="McCombie W.R."/>
            <person name="Minx P."/>
            <person name="Cordum H."/>
            <person name="Wilson R."/>
            <person name="Jin W."/>
            <person name="Lee H.R."/>
            <person name="Jiang J."/>
            <person name="Jackson S."/>
        </authorList>
    </citation>
    <scope>NUCLEOTIDE SEQUENCE [LARGE SCALE GENOMIC DNA]</scope>
    <source>
        <strain>cv. Nipponbare</strain>
    </source>
</reference>
<reference key="3">
    <citation type="journal article" date="2005" name="Nature">
        <title>The map-based sequence of the rice genome.</title>
        <authorList>
            <consortium name="International rice genome sequencing project (IRGSP)"/>
        </authorList>
    </citation>
    <scope>NUCLEOTIDE SEQUENCE [LARGE SCALE GENOMIC DNA]</scope>
    <source>
        <strain>cv. Nipponbare</strain>
    </source>
</reference>
<reference key="4">
    <citation type="journal article" date="2008" name="Nucleic Acids Res.">
        <title>The rice annotation project database (RAP-DB): 2008 update.</title>
        <authorList>
            <consortium name="The rice annotation project (RAP)"/>
        </authorList>
    </citation>
    <scope>GENOME REANNOTATION</scope>
    <source>
        <strain>cv. Nipponbare</strain>
    </source>
</reference>
<reference key="5">
    <citation type="journal article" date="2013" name="Rice">
        <title>Improvement of the Oryza sativa Nipponbare reference genome using next generation sequence and optical map data.</title>
        <authorList>
            <person name="Kawahara Y."/>
            <person name="de la Bastide M."/>
            <person name="Hamilton J.P."/>
            <person name="Kanamori H."/>
            <person name="McCombie W.R."/>
            <person name="Ouyang S."/>
            <person name="Schwartz D.C."/>
            <person name="Tanaka T."/>
            <person name="Wu J."/>
            <person name="Zhou S."/>
            <person name="Childs K.L."/>
            <person name="Davidson R.M."/>
            <person name="Lin H."/>
            <person name="Quesada-Ocampo L."/>
            <person name="Vaillancourt B."/>
            <person name="Sakai H."/>
            <person name="Lee S.S."/>
            <person name="Kim J."/>
            <person name="Numa H."/>
            <person name="Itoh T."/>
            <person name="Buell C.R."/>
            <person name="Matsumoto T."/>
        </authorList>
    </citation>
    <scope>GENOME REANNOTATION</scope>
    <source>
        <strain>cv. Nipponbare</strain>
    </source>
</reference>
<reference key="6">
    <citation type="journal article" date="2003" name="Science">
        <title>Collection, mapping, and annotation of over 28,000 cDNA clones from japonica rice.</title>
        <authorList>
            <consortium name="The rice full-length cDNA consortium"/>
        </authorList>
    </citation>
    <scope>NUCLEOTIDE SEQUENCE [LARGE SCALE MRNA]</scope>
    <source>
        <strain>cv. Nipponbare</strain>
    </source>
</reference>
<reference key="7">
    <citation type="submission" date="1994-09" db="EMBL/GenBank/DDBJ databases">
        <authorList>
            <person name="Krishnan H.B."/>
        </authorList>
    </citation>
    <scope>NUCLEOTIDE SEQUENCE [MRNA] OF 34-226</scope>
    <source>
        <strain>cv. Tainung 67</strain>
        <tissue>Endosperm</tissue>
    </source>
</reference>